<evidence type="ECO:0000255" key="1">
    <source>
        <dbReference type="HAMAP-Rule" id="MF_02011"/>
    </source>
</evidence>
<evidence type="ECO:0000256" key="2">
    <source>
        <dbReference type="SAM" id="MobiDB-lite"/>
    </source>
</evidence>
<proteinExistence type="inferred from homology"/>
<comment type="function">
    <text evidence="1">Divisome component that associates with the complex late in its assembly, after the Z-ring is formed, and is dependent on DivIC and PBP2B for its recruitment to the divisome. Together with EzrA, is a key component of the system that regulates PBP1 localization during cell cycle progression. Its main role could be the removal of PBP1 from the cell pole after pole maturation is completed. Also contributes to the recruitment of PBP1 to the division complex. Not essential for septum formation.</text>
</comment>
<comment type="subunit">
    <text evidence="1">Forms polymers through the coiled coil domains. Interacts with PBP1, MreC and EzrA.</text>
</comment>
<comment type="subcellular location">
    <subcellularLocation>
        <location evidence="1">Cytoplasm</location>
    </subcellularLocation>
    <text evidence="1">Shuttles between the lateral wall and the division site in a cell cycle-dependent manner.</text>
</comment>
<comment type="similarity">
    <text evidence="1">Belongs to the GpsB family.</text>
</comment>
<accession>Q5M1K5</accession>
<reference key="1">
    <citation type="journal article" date="2004" name="Nat. Biotechnol.">
        <title>Complete sequence and comparative genome analysis of the dairy bacterium Streptococcus thermophilus.</title>
        <authorList>
            <person name="Bolotin A."/>
            <person name="Quinquis B."/>
            <person name="Renault P."/>
            <person name="Sorokin A."/>
            <person name="Ehrlich S.D."/>
            <person name="Kulakauskas S."/>
            <person name="Lapidus A."/>
            <person name="Goltsman E."/>
            <person name="Mazur M."/>
            <person name="Pusch G.D."/>
            <person name="Fonstein M."/>
            <person name="Overbeek R."/>
            <person name="Kyprides N."/>
            <person name="Purnelle B."/>
            <person name="Prozzi D."/>
            <person name="Ngui K."/>
            <person name="Masuy D."/>
            <person name="Hancy F."/>
            <person name="Burteau S."/>
            <person name="Boutry M."/>
            <person name="Delcour J."/>
            <person name="Goffeau A."/>
            <person name="Hols P."/>
        </authorList>
    </citation>
    <scope>NUCLEOTIDE SEQUENCE [LARGE SCALE GENOMIC DNA]</scope>
    <source>
        <strain>CNRZ 1066</strain>
    </source>
</reference>
<gene>
    <name evidence="1" type="primary">gpsB</name>
    <name type="ordered locus">str0233</name>
</gene>
<protein>
    <recommendedName>
        <fullName evidence="1">Cell cycle protein GpsB</fullName>
    </recommendedName>
    <alternativeName>
        <fullName evidence="1">Guiding PBP1-shuttling protein</fullName>
    </alternativeName>
</protein>
<dbReference type="EMBL" id="CP000024">
    <property type="protein sequence ID" value="AAV61847.1"/>
    <property type="molecule type" value="Genomic_DNA"/>
</dbReference>
<dbReference type="RefSeq" id="WP_011225420.1">
    <property type="nucleotide sequence ID" value="NC_006449.1"/>
</dbReference>
<dbReference type="SMR" id="Q5M1K5"/>
<dbReference type="GeneID" id="66898164"/>
<dbReference type="KEGG" id="stc:str0233"/>
<dbReference type="HOGENOM" id="CLU_140309_1_0_9"/>
<dbReference type="GO" id="GO:0005737">
    <property type="term" value="C:cytoplasm"/>
    <property type="evidence" value="ECO:0007669"/>
    <property type="project" value="UniProtKB-SubCell"/>
</dbReference>
<dbReference type="GO" id="GO:0051301">
    <property type="term" value="P:cell division"/>
    <property type="evidence" value="ECO:0007669"/>
    <property type="project" value="UniProtKB-UniRule"/>
</dbReference>
<dbReference type="GO" id="GO:0008360">
    <property type="term" value="P:regulation of cell shape"/>
    <property type="evidence" value="ECO:0007669"/>
    <property type="project" value="UniProtKB-UniRule"/>
</dbReference>
<dbReference type="Gene3D" id="6.10.250.660">
    <property type="match status" value="1"/>
</dbReference>
<dbReference type="HAMAP" id="MF_02011">
    <property type="entry name" value="GpsB"/>
    <property type="match status" value="1"/>
</dbReference>
<dbReference type="InterPro" id="IPR011229">
    <property type="entry name" value="Cell_cycle_GpsB"/>
</dbReference>
<dbReference type="InterPro" id="IPR019933">
    <property type="entry name" value="DivIVA_domain"/>
</dbReference>
<dbReference type="InterPro" id="IPR007793">
    <property type="entry name" value="DivIVA_fam"/>
</dbReference>
<dbReference type="NCBIfam" id="TIGR03544">
    <property type="entry name" value="DivI1A_domain"/>
    <property type="match status" value="1"/>
</dbReference>
<dbReference type="NCBIfam" id="NF010725">
    <property type="entry name" value="PRK14127.1"/>
    <property type="match status" value="1"/>
</dbReference>
<dbReference type="PANTHER" id="PTHR35794:SF1">
    <property type="entry name" value="CELL CYCLE PROTEIN GPSB"/>
    <property type="match status" value="1"/>
</dbReference>
<dbReference type="PANTHER" id="PTHR35794">
    <property type="entry name" value="CELL DIVISION PROTEIN DIVIVA"/>
    <property type="match status" value="1"/>
</dbReference>
<dbReference type="Pfam" id="PF05103">
    <property type="entry name" value="DivIVA"/>
    <property type="match status" value="1"/>
</dbReference>
<dbReference type="PIRSF" id="PIRSF029938">
    <property type="entry name" value="UCP029938"/>
    <property type="match status" value="1"/>
</dbReference>
<name>GPSB_STRT1</name>
<keyword id="KW-0131">Cell cycle</keyword>
<keyword id="KW-0132">Cell division</keyword>
<keyword id="KW-0133">Cell shape</keyword>
<keyword id="KW-0175">Coiled coil</keyword>
<keyword id="KW-0963">Cytoplasm</keyword>
<organism>
    <name type="scientific">Streptococcus thermophilus (strain CNRZ 1066)</name>
    <dbReference type="NCBI Taxonomy" id="299768"/>
    <lineage>
        <taxon>Bacteria</taxon>
        <taxon>Bacillati</taxon>
        <taxon>Bacillota</taxon>
        <taxon>Bacilli</taxon>
        <taxon>Lactobacillales</taxon>
        <taxon>Streptococcaceae</taxon>
        <taxon>Streptococcus</taxon>
    </lineage>
</organism>
<feature type="chain" id="PRO_0000337971" description="Cell cycle protein GpsB">
    <location>
        <begin position="1"/>
        <end position="110"/>
    </location>
</feature>
<feature type="region of interest" description="Disordered" evidence="2">
    <location>
        <begin position="59"/>
        <end position="79"/>
    </location>
</feature>
<feature type="coiled-coil region" evidence="1">
    <location>
        <begin position="37"/>
        <end position="63"/>
    </location>
</feature>
<feature type="compositionally biased region" description="Low complexity" evidence="2">
    <location>
        <begin position="60"/>
        <end position="75"/>
    </location>
</feature>
<sequence length="110" mass="12374">MAKINLTPKKIYEQEFKTSIRGYDKTEVDEFLDDVIKDYTVYIALVKELQEENAKLKAKATSAPASRPAYASATSEPSHATTNIASASNYDILKRISRLEKEVFGKQIVE</sequence>